<dbReference type="EC" id="2.1.1.-"/>
<dbReference type="EMBL" id="AM408590">
    <property type="protein sequence ID" value="CAL70245.1"/>
    <property type="molecule type" value="Genomic_DNA"/>
</dbReference>
<dbReference type="RefSeq" id="WP_010950364.1">
    <property type="nucleotide sequence ID" value="NC_008769.1"/>
</dbReference>
<dbReference type="SMR" id="A1KF44"/>
<dbReference type="KEGG" id="mbb:BCG_0261c"/>
<dbReference type="HOGENOM" id="CLU_073035_0_0_11"/>
<dbReference type="Proteomes" id="UP000001472">
    <property type="component" value="Chromosome"/>
</dbReference>
<dbReference type="GO" id="GO:0008757">
    <property type="term" value="F:S-adenosylmethionine-dependent methyltransferase activity"/>
    <property type="evidence" value="ECO:0007669"/>
    <property type="project" value="InterPro"/>
</dbReference>
<dbReference type="GO" id="GO:0032259">
    <property type="term" value="P:methylation"/>
    <property type="evidence" value="ECO:0007669"/>
    <property type="project" value="UniProtKB-KW"/>
</dbReference>
<dbReference type="CDD" id="cd02440">
    <property type="entry name" value="AdoMet_MTases"/>
    <property type="match status" value="1"/>
</dbReference>
<dbReference type="Gene3D" id="3.40.50.150">
    <property type="entry name" value="Vaccinia Virus protein VP39"/>
    <property type="match status" value="1"/>
</dbReference>
<dbReference type="InterPro" id="IPR013216">
    <property type="entry name" value="Methyltransf_11"/>
</dbReference>
<dbReference type="InterPro" id="IPR029063">
    <property type="entry name" value="SAM-dependent_MTases_sf"/>
</dbReference>
<dbReference type="PANTHER" id="PTHR43591:SF24">
    <property type="entry name" value="2-METHOXY-6-POLYPRENYL-1,4-BENZOQUINOL METHYLASE, MITOCHONDRIAL"/>
    <property type="match status" value="1"/>
</dbReference>
<dbReference type="PANTHER" id="PTHR43591">
    <property type="entry name" value="METHYLTRANSFERASE"/>
    <property type="match status" value="1"/>
</dbReference>
<dbReference type="Pfam" id="PF08241">
    <property type="entry name" value="Methyltransf_11"/>
    <property type="match status" value="1"/>
</dbReference>
<dbReference type="SUPFAM" id="SSF53335">
    <property type="entry name" value="S-adenosyl-L-methionine-dependent methyltransferases"/>
    <property type="match status" value="1"/>
</dbReference>
<protein>
    <recommendedName>
        <fullName>Uncharacterized methyltransferase BCG_0261c</fullName>
        <ecNumber>2.1.1.-</ecNumber>
    </recommendedName>
</protein>
<gene>
    <name type="ordered locus">BCG_0261c</name>
</gene>
<reference key="1">
    <citation type="journal article" date="2007" name="Proc. Natl. Acad. Sci. U.S.A.">
        <title>Genome plasticity of BCG and impact on vaccine efficacy.</title>
        <authorList>
            <person name="Brosch R."/>
            <person name="Gordon S.V."/>
            <person name="Garnier T."/>
            <person name="Eiglmeier K."/>
            <person name="Frigui W."/>
            <person name="Valenti P."/>
            <person name="Dos Santos S."/>
            <person name="Duthoy S."/>
            <person name="Lacroix C."/>
            <person name="Garcia-Pelayo C."/>
            <person name="Inwald J.K."/>
            <person name="Golby P."/>
            <person name="Garcia J.N."/>
            <person name="Hewinson R.G."/>
            <person name="Behr M.A."/>
            <person name="Quail M.A."/>
            <person name="Churcher C."/>
            <person name="Barrell B.G."/>
            <person name="Parkhill J."/>
            <person name="Cole S.T."/>
        </authorList>
    </citation>
    <scope>NUCLEOTIDE SEQUENCE [LARGE SCALE GENOMIC DNA]</scope>
    <source>
        <strain>BCG / Pasteur 1173P2</strain>
    </source>
</reference>
<accession>A1KF44</accession>
<feature type="chain" id="PRO_0000380599" description="Uncharacterized methyltransferase BCG_0261c">
    <location>
        <begin position="1"/>
        <end position="254"/>
    </location>
</feature>
<name>Y261_MYCBP</name>
<comment type="similarity">
    <text evidence="1">Belongs to the methyltransferase superfamily.</text>
</comment>
<evidence type="ECO:0000305" key="1"/>
<keyword id="KW-0489">Methyltransferase</keyword>
<keyword id="KW-0808">Transferase</keyword>
<proteinExistence type="inferred from homology"/>
<sequence>MAVTDVFARRATLRRSLRLLADFRYEQRDPARFYRTLAADTAAMIGDLWLATHSEPPVGRTLLDVGGGPGYFATAFSDAGVGYIGVEPDPDEMHAAGPAFTGRPGMFVRASGMALPLADDSVDICLSSNVAEHVPRPWQLGTEMLRVTKPGGLVVLSYTVWLGPFGGHEMGLSHYLGGARAAARYVRKHGHPAKNNYGSSLFAVSAAEGLRWAAGTGAALAVFPRYHPRWAWWLTSVPVLREFLVSNLVLVLTP</sequence>
<organism>
    <name type="scientific">Mycobacterium bovis (strain BCG / Pasteur 1173P2)</name>
    <dbReference type="NCBI Taxonomy" id="410289"/>
    <lineage>
        <taxon>Bacteria</taxon>
        <taxon>Bacillati</taxon>
        <taxon>Actinomycetota</taxon>
        <taxon>Actinomycetes</taxon>
        <taxon>Mycobacteriales</taxon>
        <taxon>Mycobacteriaceae</taxon>
        <taxon>Mycobacterium</taxon>
        <taxon>Mycobacterium tuberculosis complex</taxon>
    </lineage>
</organism>